<dbReference type="EMBL" id="CP000076">
    <property type="protein sequence ID" value="AAY95187.2"/>
    <property type="molecule type" value="Genomic_DNA"/>
</dbReference>
<dbReference type="RefSeq" id="WP_011064171.1">
    <property type="nucleotide sequence ID" value="NC_004129.6"/>
</dbReference>
<dbReference type="SMR" id="Q4K3X7"/>
<dbReference type="STRING" id="220664.PFL_5998"/>
<dbReference type="KEGG" id="pfl:PFL_5998"/>
<dbReference type="PATRIC" id="fig|220664.5.peg.6119"/>
<dbReference type="eggNOG" id="COG1495">
    <property type="taxonomic scope" value="Bacteria"/>
</dbReference>
<dbReference type="HOGENOM" id="CLU_098660_1_1_6"/>
<dbReference type="Proteomes" id="UP000008540">
    <property type="component" value="Chromosome"/>
</dbReference>
<dbReference type="GO" id="GO:0005886">
    <property type="term" value="C:plasma membrane"/>
    <property type="evidence" value="ECO:0007669"/>
    <property type="project" value="UniProtKB-SubCell"/>
</dbReference>
<dbReference type="GO" id="GO:0009055">
    <property type="term" value="F:electron transfer activity"/>
    <property type="evidence" value="ECO:0007669"/>
    <property type="project" value="UniProtKB-UniRule"/>
</dbReference>
<dbReference type="GO" id="GO:0015035">
    <property type="term" value="F:protein-disulfide reductase activity"/>
    <property type="evidence" value="ECO:0007669"/>
    <property type="project" value="UniProtKB-UniRule"/>
</dbReference>
<dbReference type="GO" id="GO:0006457">
    <property type="term" value="P:protein folding"/>
    <property type="evidence" value="ECO:0007669"/>
    <property type="project" value="InterPro"/>
</dbReference>
<dbReference type="Gene3D" id="1.20.1550.10">
    <property type="entry name" value="DsbB-like"/>
    <property type="match status" value="1"/>
</dbReference>
<dbReference type="HAMAP" id="MF_00286">
    <property type="entry name" value="DsbB"/>
    <property type="match status" value="1"/>
</dbReference>
<dbReference type="InterPro" id="IPR003752">
    <property type="entry name" value="DiS_bond_form_DsbB/BdbC"/>
</dbReference>
<dbReference type="InterPro" id="IPR022920">
    <property type="entry name" value="Disulphide_bond_form_DsbB"/>
</dbReference>
<dbReference type="InterPro" id="IPR050183">
    <property type="entry name" value="DsbB"/>
</dbReference>
<dbReference type="InterPro" id="IPR023380">
    <property type="entry name" value="DsbB-like_sf"/>
</dbReference>
<dbReference type="PANTHER" id="PTHR36570">
    <property type="entry name" value="DISULFIDE BOND FORMATION PROTEIN B"/>
    <property type="match status" value="1"/>
</dbReference>
<dbReference type="PANTHER" id="PTHR36570:SF3">
    <property type="entry name" value="DISULFIDE BOND FORMATION PROTEIN B"/>
    <property type="match status" value="1"/>
</dbReference>
<dbReference type="Pfam" id="PF02600">
    <property type="entry name" value="DsbB"/>
    <property type="match status" value="1"/>
</dbReference>
<dbReference type="SUPFAM" id="SSF158442">
    <property type="entry name" value="DsbB-like"/>
    <property type="match status" value="1"/>
</dbReference>
<accession>Q4K3X7</accession>
<organism>
    <name type="scientific">Pseudomonas fluorescens (strain ATCC BAA-477 / NRRL B-23932 / Pf-5)</name>
    <dbReference type="NCBI Taxonomy" id="220664"/>
    <lineage>
        <taxon>Bacteria</taxon>
        <taxon>Pseudomonadati</taxon>
        <taxon>Pseudomonadota</taxon>
        <taxon>Gammaproteobacteria</taxon>
        <taxon>Pseudomonadales</taxon>
        <taxon>Pseudomonadaceae</taxon>
        <taxon>Pseudomonas</taxon>
    </lineage>
</organism>
<keyword id="KW-0997">Cell inner membrane</keyword>
<keyword id="KW-1003">Cell membrane</keyword>
<keyword id="KW-0143">Chaperone</keyword>
<keyword id="KW-1015">Disulfide bond</keyword>
<keyword id="KW-0249">Electron transport</keyword>
<keyword id="KW-0472">Membrane</keyword>
<keyword id="KW-0560">Oxidoreductase</keyword>
<keyword id="KW-0676">Redox-active center</keyword>
<keyword id="KW-0812">Transmembrane</keyword>
<keyword id="KW-1133">Transmembrane helix</keyword>
<keyword id="KW-0813">Transport</keyword>
<feature type="chain" id="PRO_0000298388" description="Disulfide bond formation protein B 2">
    <location>
        <begin position="1"/>
        <end position="173"/>
    </location>
</feature>
<feature type="topological domain" description="Cytoplasmic" evidence="1">
    <location>
        <begin position="1"/>
        <end position="9"/>
    </location>
</feature>
<feature type="transmembrane region" description="Helical" evidence="1">
    <location>
        <begin position="10"/>
        <end position="26"/>
    </location>
</feature>
<feature type="topological domain" description="Periplasmic" evidence="1">
    <location>
        <begin position="27"/>
        <end position="44"/>
    </location>
</feature>
<feature type="transmembrane region" description="Helical" evidence="1">
    <location>
        <begin position="45"/>
        <end position="61"/>
    </location>
</feature>
<feature type="topological domain" description="Cytoplasmic" evidence="1">
    <location>
        <begin position="62"/>
        <end position="67"/>
    </location>
</feature>
<feature type="transmembrane region" description="Helical" evidence="1">
    <location>
        <begin position="68"/>
        <end position="85"/>
    </location>
</feature>
<feature type="topological domain" description="Periplasmic" evidence="1">
    <location>
        <begin position="86"/>
        <end position="142"/>
    </location>
</feature>
<feature type="transmembrane region" description="Helical" evidence="1">
    <location>
        <begin position="143"/>
        <end position="161"/>
    </location>
</feature>
<feature type="topological domain" description="Cytoplasmic" evidence="1">
    <location>
        <begin position="162"/>
        <end position="173"/>
    </location>
</feature>
<feature type="disulfide bond" description="Redox-active" evidence="1">
    <location>
        <begin position="101"/>
        <end position="128"/>
    </location>
</feature>
<evidence type="ECO:0000255" key="1">
    <source>
        <dbReference type="HAMAP-Rule" id="MF_00286"/>
    </source>
</evidence>
<gene>
    <name evidence="1" type="primary">dsbB2</name>
    <name type="ordered locus">PFL_5998</name>
</gene>
<proteinExistence type="inferred from homology"/>
<comment type="function">
    <text evidence="1">Required for disulfide bond formation in some periplasmic proteins. Acts by oxidizing the DsbA protein.</text>
</comment>
<comment type="subcellular location">
    <subcellularLocation>
        <location evidence="1">Cell inner membrane</location>
        <topology evidence="1">Multi-pass membrane protein</topology>
    </subcellularLocation>
</comment>
<comment type="similarity">
    <text evidence="1">Belongs to the DsbB family.</text>
</comment>
<name>DSBB2_PSEF5</name>
<protein>
    <recommendedName>
        <fullName evidence="1">Disulfide bond formation protein B 2</fullName>
    </recommendedName>
    <alternativeName>
        <fullName evidence="1">Disulfide oxidoreductase 2</fullName>
    </alternativeName>
</protein>
<reference key="1">
    <citation type="journal article" date="2005" name="Nat. Biotechnol.">
        <title>Complete genome sequence of the plant commensal Pseudomonas fluorescens Pf-5.</title>
        <authorList>
            <person name="Paulsen I.T."/>
            <person name="Press C.M."/>
            <person name="Ravel J."/>
            <person name="Kobayashi D.Y."/>
            <person name="Myers G.S.A."/>
            <person name="Mavrodi D.V."/>
            <person name="DeBoy R.T."/>
            <person name="Seshadri R."/>
            <person name="Ren Q."/>
            <person name="Madupu R."/>
            <person name="Dodson R.J."/>
            <person name="Durkin A.S."/>
            <person name="Brinkac L.M."/>
            <person name="Daugherty S.C."/>
            <person name="Sullivan S.A."/>
            <person name="Rosovitz M.J."/>
            <person name="Gwinn M.L."/>
            <person name="Zhou L."/>
            <person name="Schneider D.J."/>
            <person name="Cartinhour S.W."/>
            <person name="Nelson W.C."/>
            <person name="Weidman J."/>
            <person name="Watkins K."/>
            <person name="Tran K."/>
            <person name="Khouri H."/>
            <person name="Pierson E.A."/>
            <person name="Pierson L.S. III"/>
            <person name="Thomashow L.S."/>
            <person name="Loper J.E."/>
        </authorList>
    </citation>
    <scope>NUCLEOTIDE SEQUENCE [LARGE SCALE GENOMIC DNA]</scope>
    <source>
        <strain>ATCC BAA-477 / NRRL B-23932 / Pf-5</strain>
    </source>
</reference>
<sequence length="173" mass="19022">MSLAGSRLLFSLVFLVGALASWAAFNLQTGGGLESCSLWSVQRLLLLALGGVNLLAVIQGPGRVGRAVYWGLNLLLGLLGVVTAGRHVLLQNIPSEQLLACLPDMSFMLRQLSWWQALKLTFMGTSDCAEVTWTLLDMSLPEWSLLFFVIMLIFSGYRLWRQLRGARKAVALP</sequence>